<accession>O51639</accession>
<proteinExistence type="inferred from homology"/>
<protein>
    <recommendedName>
        <fullName evidence="1">RNA-binding protein KhpA</fullName>
    </recommendedName>
    <alternativeName>
        <fullName evidence="1">KH-domain protein A</fullName>
    </alternativeName>
</protein>
<reference key="1">
    <citation type="journal article" date="1997" name="Nature">
        <title>Genomic sequence of a Lyme disease spirochaete, Borrelia burgdorferi.</title>
        <authorList>
            <person name="Fraser C.M."/>
            <person name="Casjens S."/>
            <person name="Huang W.M."/>
            <person name="Sutton G.G."/>
            <person name="Clayton R.A."/>
            <person name="Lathigra R."/>
            <person name="White O."/>
            <person name="Ketchum K.A."/>
            <person name="Dodson R.J."/>
            <person name="Hickey E.K."/>
            <person name="Gwinn M.L."/>
            <person name="Dougherty B.A."/>
            <person name="Tomb J.-F."/>
            <person name="Fleischmann R.D."/>
            <person name="Richardson D.L."/>
            <person name="Peterson J.D."/>
            <person name="Kerlavage A.R."/>
            <person name="Quackenbush J."/>
            <person name="Salzberg S.L."/>
            <person name="Hanson M."/>
            <person name="van Vugt R."/>
            <person name="Palmer N."/>
            <person name="Adams M.D."/>
            <person name="Gocayne J.D."/>
            <person name="Weidman J.F."/>
            <person name="Utterback T.R."/>
            <person name="Watthey L."/>
            <person name="McDonald L.A."/>
            <person name="Artiach P."/>
            <person name="Bowman C."/>
            <person name="Garland S.A."/>
            <person name="Fujii C."/>
            <person name="Cotton M.D."/>
            <person name="Horst K."/>
            <person name="Roberts K.M."/>
            <person name="Hatch B."/>
            <person name="Smith H.O."/>
            <person name="Venter J.C."/>
        </authorList>
    </citation>
    <scope>NUCLEOTIDE SEQUENCE [LARGE SCALE GENOMIC DNA]</scope>
    <source>
        <strain>ATCC 35210 / DSM 4680 / CIP 102532 / B31</strain>
    </source>
</reference>
<evidence type="ECO:0000255" key="1">
    <source>
        <dbReference type="HAMAP-Rule" id="MF_00088"/>
    </source>
</evidence>
<sequence length="82" mass="9253">MKEYGNEIELIEFIVKSLVDKEDEVKLNVIEGEKSTILELRVSQSDVGKIIGRRGRIARAIRTLLGACAAKTNRRVQLEILD</sequence>
<dbReference type="EMBL" id="AE000783">
    <property type="protein sequence ID" value="AAC67047.1"/>
    <property type="molecule type" value="Genomic_DNA"/>
</dbReference>
<dbReference type="PIR" id="G70186">
    <property type="entry name" value="G70186"/>
</dbReference>
<dbReference type="RefSeq" id="NP_212830.1">
    <property type="nucleotide sequence ID" value="NC_001318.1"/>
</dbReference>
<dbReference type="RefSeq" id="WP_002557283.1">
    <property type="nucleotide sequence ID" value="NC_001318.1"/>
</dbReference>
<dbReference type="SMR" id="O51639"/>
<dbReference type="STRING" id="224326.BB_0696"/>
<dbReference type="PaxDb" id="224326-BB_0696"/>
<dbReference type="EnsemblBacteria" id="AAC67047">
    <property type="protein sequence ID" value="AAC67047"/>
    <property type="gene ID" value="BB_0696"/>
</dbReference>
<dbReference type="KEGG" id="bbu:BB_0696"/>
<dbReference type="PATRIC" id="fig|224326.49.peg.1087"/>
<dbReference type="HOGENOM" id="CLU_132074_1_0_12"/>
<dbReference type="OrthoDB" id="9812389at2"/>
<dbReference type="Proteomes" id="UP000001807">
    <property type="component" value="Chromosome"/>
</dbReference>
<dbReference type="GO" id="GO:0005737">
    <property type="term" value="C:cytoplasm"/>
    <property type="evidence" value="ECO:0007669"/>
    <property type="project" value="UniProtKB-SubCell"/>
</dbReference>
<dbReference type="GO" id="GO:0003723">
    <property type="term" value="F:RNA binding"/>
    <property type="evidence" value="ECO:0007669"/>
    <property type="project" value="UniProtKB-UniRule"/>
</dbReference>
<dbReference type="GO" id="GO:0071555">
    <property type="term" value="P:cell wall organization"/>
    <property type="evidence" value="ECO:0007669"/>
    <property type="project" value="UniProtKB-KW"/>
</dbReference>
<dbReference type="GO" id="GO:0009252">
    <property type="term" value="P:peptidoglycan biosynthetic process"/>
    <property type="evidence" value="ECO:0007669"/>
    <property type="project" value="UniProtKB-UniRule"/>
</dbReference>
<dbReference type="GO" id="GO:0008360">
    <property type="term" value="P:regulation of cell shape"/>
    <property type="evidence" value="ECO:0007669"/>
    <property type="project" value="UniProtKB-KW"/>
</dbReference>
<dbReference type="CDD" id="cd22533">
    <property type="entry name" value="KH-II_YlqC-like"/>
    <property type="match status" value="1"/>
</dbReference>
<dbReference type="Gene3D" id="3.30.300.20">
    <property type="match status" value="1"/>
</dbReference>
<dbReference type="HAMAP" id="MF_00088">
    <property type="entry name" value="KhpA"/>
    <property type="match status" value="1"/>
</dbReference>
<dbReference type="InterPro" id="IPR015946">
    <property type="entry name" value="KH_dom-like_a/b"/>
</dbReference>
<dbReference type="InterPro" id="IPR009019">
    <property type="entry name" value="KH_sf_prok-type"/>
</dbReference>
<dbReference type="InterPro" id="IPR020627">
    <property type="entry name" value="KhpA"/>
</dbReference>
<dbReference type="PANTHER" id="PTHR34654:SF1">
    <property type="entry name" value="RNA-BINDING PROTEIN KHPA"/>
    <property type="match status" value="1"/>
</dbReference>
<dbReference type="PANTHER" id="PTHR34654">
    <property type="entry name" value="UPF0109 PROTEIN SCO5592"/>
    <property type="match status" value="1"/>
</dbReference>
<dbReference type="Pfam" id="PF13083">
    <property type="entry name" value="KH_KhpA-B"/>
    <property type="match status" value="1"/>
</dbReference>
<dbReference type="SUPFAM" id="SSF54814">
    <property type="entry name" value="Prokaryotic type KH domain (KH-domain type II)"/>
    <property type="match status" value="1"/>
</dbReference>
<dbReference type="PROSITE" id="PS50084">
    <property type="entry name" value="KH_TYPE_1"/>
    <property type="match status" value="1"/>
</dbReference>
<keyword id="KW-0133">Cell shape</keyword>
<keyword id="KW-0961">Cell wall biogenesis/degradation</keyword>
<keyword id="KW-0143">Chaperone</keyword>
<keyword id="KW-0963">Cytoplasm</keyword>
<keyword id="KW-1185">Reference proteome</keyword>
<keyword id="KW-0694">RNA-binding</keyword>
<feature type="chain" id="PRO_0000163217" description="RNA-binding protein KhpA">
    <location>
        <begin position="1"/>
        <end position="82"/>
    </location>
</feature>
<feature type="domain" description="KH" evidence="1">
    <location>
        <begin position="35"/>
        <end position="82"/>
    </location>
</feature>
<gene>
    <name evidence="1" type="primary">khpA</name>
    <name type="ordered locus">BB_0696</name>
</gene>
<organism>
    <name type="scientific">Borreliella burgdorferi (strain ATCC 35210 / DSM 4680 / CIP 102532 / B31)</name>
    <name type="common">Borrelia burgdorferi</name>
    <dbReference type="NCBI Taxonomy" id="224326"/>
    <lineage>
        <taxon>Bacteria</taxon>
        <taxon>Pseudomonadati</taxon>
        <taxon>Spirochaetota</taxon>
        <taxon>Spirochaetia</taxon>
        <taxon>Spirochaetales</taxon>
        <taxon>Borreliaceae</taxon>
        <taxon>Borreliella</taxon>
    </lineage>
</organism>
<name>KHPA_BORBU</name>
<comment type="function">
    <text evidence="1">A probable RNA chaperone. Forms a complex with KhpB which binds to cellular RNA and controls its expression. Plays a role in peptidoglycan (PG) homeostasis and cell length regulation.</text>
</comment>
<comment type="subunit">
    <text evidence="1">Forms a complex with KhpB.</text>
</comment>
<comment type="subcellular location">
    <subcellularLocation>
        <location evidence="1">Cytoplasm</location>
    </subcellularLocation>
</comment>
<comment type="similarity">
    <text evidence="1">Belongs to the KhpA RNA-binding protein family.</text>
</comment>